<feature type="chain" id="PRO_1000009228" description="UPF0102 protein mma_0204">
    <location>
        <begin position="1"/>
        <end position="123"/>
    </location>
</feature>
<accession>A6SUE7</accession>
<evidence type="ECO:0000255" key="1">
    <source>
        <dbReference type="HAMAP-Rule" id="MF_00048"/>
    </source>
</evidence>
<organism>
    <name type="scientific">Janthinobacterium sp. (strain Marseille)</name>
    <name type="common">Minibacterium massiliensis</name>
    <dbReference type="NCBI Taxonomy" id="375286"/>
    <lineage>
        <taxon>Bacteria</taxon>
        <taxon>Pseudomonadati</taxon>
        <taxon>Pseudomonadota</taxon>
        <taxon>Betaproteobacteria</taxon>
        <taxon>Burkholderiales</taxon>
        <taxon>Oxalobacteraceae</taxon>
        <taxon>Janthinobacterium</taxon>
    </lineage>
</organism>
<protein>
    <recommendedName>
        <fullName evidence="1">UPF0102 protein mma_0204</fullName>
    </recommendedName>
</protein>
<proteinExistence type="inferred from homology"/>
<gene>
    <name type="ordered locus">mma_0204</name>
</gene>
<sequence length="123" mass="13902">MRLPAFLRPRTAKQLAGQAGEDQALIYLQQQGLQLLERNFRCKGGEIDLLMQDGKALVFVEVRMRSEKKFGGAAASIGTAKQKRLIIAAQIYLQRYSMPPPCRFDVIAFDDKEMTWLKNAIEA</sequence>
<comment type="similarity">
    <text evidence="1">Belongs to the UPF0102 family.</text>
</comment>
<dbReference type="EMBL" id="CP000269">
    <property type="protein sequence ID" value="ABR90287.1"/>
    <property type="molecule type" value="Genomic_DNA"/>
</dbReference>
<dbReference type="RefSeq" id="WP_011979430.1">
    <property type="nucleotide sequence ID" value="NC_009659.1"/>
</dbReference>
<dbReference type="SMR" id="A6SUE7"/>
<dbReference type="STRING" id="375286.mma_0204"/>
<dbReference type="KEGG" id="mms:mma_0204"/>
<dbReference type="eggNOG" id="COG0792">
    <property type="taxonomic scope" value="Bacteria"/>
</dbReference>
<dbReference type="HOGENOM" id="CLU_115353_1_0_4"/>
<dbReference type="OrthoDB" id="9794876at2"/>
<dbReference type="Proteomes" id="UP000006388">
    <property type="component" value="Chromosome"/>
</dbReference>
<dbReference type="GO" id="GO:0003676">
    <property type="term" value="F:nucleic acid binding"/>
    <property type="evidence" value="ECO:0007669"/>
    <property type="project" value="InterPro"/>
</dbReference>
<dbReference type="Gene3D" id="3.40.1350.10">
    <property type="match status" value="1"/>
</dbReference>
<dbReference type="HAMAP" id="MF_00048">
    <property type="entry name" value="UPF0102"/>
    <property type="match status" value="1"/>
</dbReference>
<dbReference type="InterPro" id="IPR011335">
    <property type="entry name" value="Restrct_endonuc-II-like"/>
</dbReference>
<dbReference type="InterPro" id="IPR011856">
    <property type="entry name" value="tRNA_endonuc-like_dom_sf"/>
</dbReference>
<dbReference type="InterPro" id="IPR003509">
    <property type="entry name" value="UPF0102_YraN-like"/>
</dbReference>
<dbReference type="NCBIfam" id="NF009150">
    <property type="entry name" value="PRK12497.1-3"/>
    <property type="match status" value="1"/>
</dbReference>
<dbReference type="NCBIfam" id="TIGR00252">
    <property type="entry name" value="YraN family protein"/>
    <property type="match status" value="1"/>
</dbReference>
<dbReference type="PANTHER" id="PTHR34039">
    <property type="entry name" value="UPF0102 PROTEIN YRAN"/>
    <property type="match status" value="1"/>
</dbReference>
<dbReference type="PANTHER" id="PTHR34039:SF1">
    <property type="entry name" value="UPF0102 PROTEIN YRAN"/>
    <property type="match status" value="1"/>
</dbReference>
<dbReference type="Pfam" id="PF02021">
    <property type="entry name" value="UPF0102"/>
    <property type="match status" value="1"/>
</dbReference>
<dbReference type="SUPFAM" id="SSF52980">
    <property type="entry name" value="Restriction endonuclease-like"/>
    <property type="match status" value="1"/>
</dbReference>
<reference key="1">
    <citation type="journal article" date="2007" name="PLoS Genet.">
        <title>Genome analysis of Minibacterium massiliensis highlights the convergent evolution of water-living bacteria.</title>
        <authorList>
            <person name="Audic S."/>
            <person name="Robert C."/>
            <person name="Campagna B."/>
            <person name="Parinello H."/>
            <person name="Claverie J.-M."/>
            <person name="Raoult D."/>
            <person name="Drancourt M."/>
        </authorList>
    </citation>
    <scope>NUCLEOTIDE SEQUENCE [LARGE SCALE GENOMIC DNA]</scope>
    <source>
        <strain>Marseille</strain>
    </source>
</reference>
<name>Y204_JANMA</name>